<proteinExistence type="inferred from homology"/>
<gene>
    <name evidence="1" type="primary">coaX</name>
    <name type="ordered locus">Dgeo_1749</name>
</gene>
<comment type="function">
    <text evidence="1">Catalyzes the phosphorylation of pantothenate (Pan), the first step in CoA biosynthesis.</text>
</comment>
<comment type="catalytic activity">
    <reaction evidence="1">
        <text>(R)-pantothenate + ATP = (R)-4'-phosphopantothenate + ADP + H(+)</text>
        <dbReference type="Rhea" id="RHEA:16373"/>
        <dbReference type="ChEBI" id="CHEBI:10986"/>
        <dbReference type="ChEBI" id="CHEBI:15378"/>
        <dbReference type="ChEBI" id="CHEBI:29032"/>
        <dbReference type="ChEBI" id="CHEBI:30616"/>
        <dbReference type="ChEBI" id="CHEBI:456216"/>
        <dbReference type="EC" id="2.7.1.33"/>
    </reaction>
</comment>
<comment type="cofactor">
    <cofactor evidence="1">
        <name>NH4(+)</name>
        <dbReference type="ChEBI" id="CHEBI:28938"/>
    </cofactor>
    <cofactor evidence="1">
        <name>K(+)</name>
        <dbReference type="ChEBI" id="CHEBI:29103"/>
    </cofactor>
    <text evidence="1">A monovalent cation. Ammonium or potassium.</text>
</comment>
<comment type="pathway">
    <text evidence="1">Cofactor biosynthesis; coenzyme A biosynthesis; CoA from (R)-pantothenate: step 1/5.</text>
</comment>
<comment type="subunit">
    <text evidence="1">Homodimer.</text>
</comment>
<comment type="subcellular location">
    <subcellularLocation>
        <location evidence="1">Cytoplasm</location>
    </subcellularLocation>
</comment>
<comment type="similarity">
    <text evidence="1">Belongs to the type III pantothenate kinase family.</text>
</comment>
<organism>
    <name type="scientific">Deinococcus geothermalis (strain DSM 11300 / CIP 105573 / AG-3a)</name>
    <dbReference type="NCBI Taxonomy" id="319795"/>
    <lineage>
        <taxon>Bacteria</taxon>
        <taxon>Thermotogati</taxon>
        <taxon>Deinococcota</taxon>
        <taxon>Deinococci</taxon>
        <taxon>Deinococcales</taxon>
        <taxon>Deinococcaceae</taxon>
        <taxon>Deinococcus</taxon>
    </lineage>
</organism>
<dbReference type="EC" id="2.7.1.33" evidence="1"/>
<dbReference type="EMBL" id="CP000359">
    <property type="protein sequence ID" value="ABF46044.1"/>
    <property type="molecule type" value="Genomic_DNA"/>
</dbReference>
<dbReference type="RefSeq" id="WP_011530875.1">
    <property type="nucleotide sequence ID" value="NC_008025.1"/>
</dbReference>
<dbReference type="SMR" id="Q1IXJ0"/>
<dbReference type="STRING" id="319795.Dgeo_1749"/>
<dbReference type="KEGG" id="dge:Dgeo_1749"/>
<dbReference type="eggNOG" id="COG1521">
    <property type="taxonomic scope" value="Bacteria"/>
</dbReference>
<dbReference type="HOGENOM" id="CLU_066627_1_0_0"/>
<dbReference type="UniPathway" id="UPA00241">
    <property type="reaction ID" value="UER00352"/>
</dbReference>
<dbReference type="Proteomes" id="UP000002431">
    <property type="component" value="Chromosome"/>
</dbReference>
<dbReference type="GO" id="GO:0005737">
    <property type="term" value="C:cytoplasm"/>
    <property type="evidence" value="ECO:0007669"/>
    <property type="project" value="UniProtKB-SubCell"/>
</dbReference>
<dbReference type="GO" id="GO:0005524">
    <property type="term" value="F:ATP binding"/>
    <property type="evidence" value="ECO:0007669"/>
    <property type="project" value="UniProtKB-UniRule"/>
</dbReference>
<dbReference type="GO" id="GO:0046872">
    <property type="term" value="F:metal ion binding"/>
    <property type="evidence" value="ECO:0007669"/>
    <property type="project" value="UniProtKB-KW"/>
</dbReference>
<dbReference type="GO" id="GO:0004594">
    <property type="term" value="F:pantothenate kinase activity"/>
    <property type="evidence" value="ECO:0007669"/>
    <property type="project" value="UniProtKB-UniRule"/>
</dbReference>
<dbReference type="GO" id="GO:0015937">
    <property type="term" value="P:coenzyme A biosynthetic process"/>
    <property type="evidence" value="ECO:0007669"/>
    <property type="project" value="UniProtKB-UniRule"/>
</dbReference>
<dbReference type="CDD" id="cd24015">
    <property type="entry name" value="ASKHA_NBD_PanK-III"/>
    <property type="match status" value="1"/>
</dbReference>
<dbReference type="Gene3D" id="3.30.420.40">
    <property type="match status" value="2"/>
</dbReference>
<dbReference type="HAMAP" id="MF_01274">
    <property type="entry name" value="Pantothen_kinase_3"/>
    <property type="match status" value="1"/>
</dbReference>
<dbReference type="InterPro" id="IPR043129">
    <property type="entry name" value="ATPase_NBD"/>
</dbReference>
<dbReference type="InterPro" id="IPR004619">
    <property type="entry name" value="Type_III_PanK"/>
</dbReference>
<dbReference type="NCBIfam" id="TIGR00671">
    <property type="entry name" value="baf"/>
    <property type="match status" value="1"/>
</dbReference>
<dbReference type="NCBIfam" id="NF009848">
    <property type="entry name" value="PRK13318.1-6"/>
    <property type="match status" value="1"/>
</dbReference>
<dbReference type="PANTHER" id="PTHR34265">
    <property type="entry name" value="TYPE III PANTOTHENATE KINASE"/>
    <property type="match status" value="1"/>
</dbReference>
<dbReference type="PANTHER" id="PTHR34265:SF1">
    <property type="entry name" value="TYPE III PANTOTHENATE KINASE"/>
    <property type="match status" value="1"/>
</dbReference>
<dbReference type="Pfam" id="PF03309">
    <property type="entry name" value="Pan_kinase"/>
    <property type="match status" value="1"/>
</dbReference>
<dbReference type="SUPFAM" id="SSF53067">
    <property type="entry name" value="Actin-like ATPase domain"/>
    <property type="match status" value="2"/>
</dbReference>
<reference key="1">
    <citation type="submission" date="2006-04" db="EMBL/GenBank/DDBJ databases">
        <title>Complete sequence of chromosome of Deinococcus geothermalis DSM 11300.</title>
        <authorList>
            <person name="Copeland A."/>
            <person name="Lucas S."/>
            <person name="Lapidus A."/>
            <person name="Barry K."/>
            <person name="Detter J.C."/>
            <person name="Glavina del Rio T."/>
            <person name="Hammon N."/>
            <person name="Israni S."/>
            <person name="Dalin E."/>
            <person name="Tice H."/>
            <person name="Pitluck S."/>
            <person name="Brettin T."/>
            <person name="Bruce D."/>
            <person name="Han C."/>
            <person name="Tapia R."/>
            <person name="Saunders E."/>
            <person name="Gilna P."/>
            <person name="Schmutz J."/>
            <person name="Larimer F."/>
            <person name="Land M."/>
            <person name="Hauser L."/>
            <person name="Kyrpides N."/>
            <person name="Kim E."/>
            <person name="Daly M.J."/>
            <person name="Fredrickson J.K."/>
            <person name="Makarova K.S."/>
            <person name="Gaidamakova E.K."/>
            <person name="Zhai M."/>
            <person name="Richardson P."/>
        </authorList>
    </citation>
    <scope>NUCLEOTIDE SEQUENCE [LARGE SCALE GENOMIC DNA]</scope>
    <source>
        <strain>DSM 11300 / CIP 105573 / AG-3a</strain>
    </source>
</reference>
<protein>
    <recommendedName>
        <fullName evidence="1">Type III pantothenate kinase</fullName>
        <ecNumber evidence="1">2.7.1.33</ecNumber>
    </recommendedName>
    <alternativeName>
        <fullName evidence="1">PanK-III</fullName>
    </alternativeName>
    <alternativeName>
        <fullName evidence="1">Pantothenic acid kinase</fullName>
    </alternativeName>
</protein>
<sequence length="266" mass="28507">MPASFPLLAVDIGNTSTVLGLADESLSLTHTWRIRTNRDLLPDDLALQLHGLFTLAGAPMPRAAVLSSVAPPLGANYAFALRRHFRVDAFEVAAENLPDVTVELDQPGSIGADRLCNLFGAERYLDAYEYAVVVDFGTSTNFDVIARGRRFLGGILATGAQVSADALFARAAKLPRITLEAPARAIGQNTVHALQSGLVFGYAEMVDGLLRRVRAELPAPAVAIATGGFARTIEGICREIDFYDETLTLRGLVELWASREAVGKGL</sequence>
<name>COAX_DEIGD</name>
<evidence type="ECO:0000255" key="1">
    <source>
        <dbReference type="HAMAP-Rule" id="MF_01274"/>
    </source>
</evidence>
<accession>Q1IXJ0</accession>
<feature type="chain" id="PRO_0000267519" description="Type III pantothenate kinase">
    <location>
        <begin position="1"/>
        <end position="266"/>
    </location>
</feature>
<feature type="active site" description="Proton acceptor" evidence="1">
    <location>
        <position position="113"/>
    </location>
</feature>
<feature type="binding site" evidence="1">
    <location>
        <begin position="11"/>
        <end position="18"/>
    </location>
    <ligand>
        <name>ATP</name>
        <dbReference type="ChEBI" id="CHEBI:30616"/>
    </ligand>
</feature>
<feature type="binding site" evidence="1">
    <location>
        <begin position="111"/>
        <end position="114"/>
    </location>
    <ligand>
        <name>substrate</name>
    </ligand>
</feature>
<feature type="binding site" evidence="1">
    <location>
        <position position="135"/>
    </location>
    <ligand>
        <name>K(+)</name>
        <dbReference type="ChEBI" id="CHEBI:29103"/>
    </ligand>
</feature>
<feature type="binding site" evidence="1">
    <location>
        <position position="138"/>
    </location>
    <ligand>
        <name>ATP</name>
        <dbReference type="ChEBI" id="CHEBI:30616"/>
    </ligand>
</feature>
<feature type="binding site" evidence="1">
    <location>
        <position position="190"/>
    </location>
    <ligand>
        <name>substrate</name>
    </ligand>
</feature>
<keyword id="KW-0067">ATP-binding</keyword>
<keyword id="KW-0173">Coenzyme A biosynthesis</keyword>
<keyword id="KW-0963">Cytoplasm</keyword>
<keyword id="KW-0418">Kinase</keyword>
<keyword id="KW-0479">Metal-binding</keyword>
<keyword id="KW-0547">Nucleotide-binding</keyword>
<keyword id="KW-0630">Potassium</keyword>
<keyword id="KW-0808">Transferase</keyword>